<sequence>MEVAELGFPETAVSQSRICLCAVLCGHWDFADMMVIRSLSLIRLEGVEGRDPVGGGNLTNKRPSCAPSPQDLSAQWKQLEDRGASSRRVDMAALFQEASSCPVCSDYLEKPMSLECGCAVCLKCINSLQKEPHGEDLLCCCSSMVSRKNKIRRNRQLERLASHIKELEPKLKKILQMNPRMRKFQVDMTLDANTANNFLLISDDLRSVRSGRIRQNRQDLAERFDVSVCILGSPRFTCGRHCWEVDVGTSTEWDLGVCRESVHRKGRIQLTTELGFWTVSLRDGGRLSATTVPLTFLFVDRKLQRVGIFLDMGMQNVSFFDAESGSHVYTFRSVSAEEPLRPFLAPSVPPNGDQGVLSICPLMNSGTTDAPVRPGEAK</sequence>
<reference key="1">
    <citation type="journal article" date="1999" name="Genome Res.">
        <title>Duplications on human chromosome 22 reveal a novel Ret finger protein-like gene family with sense and endogenous antisense transcripts.</title>
        <authorList>
            <person name="Seroussi E."/>
            <person name="Kedra D."/>
            <person name="Pan H.-Q."/>
            <person name="Peyrad M."/>
            <person name="Schwartz C."/>
            <person name="Scambler P."/>
            <person name="Donnai D."/>
            <person name="Roe B.A."/>
            <person name="Dumanski J.P."/>
        </authorList>
    </citation>
    <scope>NUCLEOTIDE SEQUENCE [MRNA] (ISOFORM 3)</scope>
    <scope>VARIANTS TYR-141; SER-290; GLY-324; CYS-341 AND ILE-348</scope>
</reference>
<reference key="2">
    <citation type="journal article" date="2004" name="Nat. Genet.">
        <title>Complete sequencing and characterization of 21,243 full-length human cDNAs.</title>
        <authorList>
            <person name="Ota T."/>
            <person name="Suzuki Y."/>
            <person name="Nishikawa T."/>
            <person name="Otsuki T."/>
            <person name="Sugiyama T."/>
            <person name="Irie R."/>
            <person name="Wakamatsu A."/>
            <person name="Hayashi K."/>
            <person name="Sato H."/>
            <person name="Nagai K."/>
            <person name="Kimura K."/>
            <person name="Makita H."/>
            <person name="Sekine M."/>
            <person name="Obayashi M."/>
            <person name="Nishi T."/>
            <person name="Shibahara T."/>
            <person name="Tanaka T."/>
            <person name="Ishii S."/>
            <person name="Yamamoto J."/>
            <person name="Saito K."/>
            <person name="Kawai Y."/>
            <person name="Isono Y."/>
            <person name="Nakamura Y."/>
            <person name="Nagahari K."/>
            <person name="Murakami K."/>
            <person name="Yasuda T."/>
            <person name="Iwayanagi T."/>
            <person name="Wagatsuma M."/>
            <person name="Shiratori A."/>
            <person name="Sudo H."/>
            <person name="Hosoiri T."/>
            <person name="Kaku Y."/>
            <person name="Kodaira H."/>
            <person name="Kondo H."/>
            <person name="Sugawara M."/>
            <person name="Takahashi M."/>
            <person name="Kanda K."/>
            <person name="Yokoi T."/>
            <person name="Furuya T."/>
            <person name="Kikkawa E."/>
            <person name="Omura Y."/>
            <person name="Abe K."/>
            <person name="Kamihara K."/>
            <person name="Katsuta N."/>
            <person name="Sato K."/>
            <person name="Tanikawa M."/>
            <person name="Yamazaki M."/>
            <person name="Ninomiya K."/>
            <person name="Ishibashi T."/>
            <person name="Yamashita H."/>
            <person name="Murakawa K."/>
            <person name="Fujimori K."/>
            <person name="Tanai H."/>
            <person name="Kimata M."/>
            <person name="Watanabe M."/>
            <person name="Hiraoka S."/>
            <person name="Chiba Y."/>
            <person name="Ishida S."/>
            <person name="Ono Y."/>
            <person name="Takiguchi S."/>
            <person name="Watanabe S."/>
            <person name="Yosida M."/>
            <person name="Hotuta T."/>
            <person name="Kusano J."/>
            <person name="Kanehori K."/>
            <person name="Takahashi-Fujii A."/>
            <person name="Hara H."/>
            <person name="Tanase T.-O."/>
            <person name="Nomura Y."/>
            <person name="Togiya S."/>
            <person name="Komai F."/>
            <person name="Hara R."/>
            <person name="Takeuchi K."/>
            <person name="Arita M."/>
            <person name="Imose N."/>
            <person name="Musashino K."/>
            <person name="Yuuki H."/>
            <person name="Oshima A."/>
            <person name="Sasaki N."/>
            <person name="Aotsuka S."/>
            <person name="Yoshikawa Y."/>
            <person name="Matsunawa H."/>
            <person name="Ichihara T."/>
            <person name="Shiohata N."/>
            <person name="Sano S."/>
            <person name="Moriya S."/>
            <person name="Momiyama H."/>
            <person name="Satoh N."/>
            <person name="Takami S."/>
            <person name="Terashima Y."/>
            <person name="Suzuki O."/>
            <person name="Nakagawa S."/>
            <person name="Senoh A."/>
            <person name="Mizoguchi H."/>
            <person name="Goto Y."/>
            <person name="Shimizu F."/>
            <person name="Wakebe H."/>
            <person name="Hishigaki H."/>
            <person name="Watanabe T."/>
            <person name="Sugiyama A."/>
            <person name="Takemoto M."/>
            <person name="Kawakami B."/>
            <person name="Yamazaki M."/>
            <person name="Watanabe K."/>
            <person name="Kumagai A."/>
            <person name="Itakura S."/>
            <person name="Fukuzumi Y."/>
            <person name="Fujimori Y."/>
            <person name="Komiyama M."/>
            <person name="Tashiro H."/>
            <person name="Tanigami A."/>
            <person name="Fujiwara T."/>
            <person name="Ono T."/>
            <person name="Yamada K."/>
            <person name="Fujii Y."/>
            <person name="Ozaki K."/>
            <person name="Hirao M."/>
            <person name="Ohmori Y."/>
            <person name="Kawabata A."/>
            <person name="Hikiji T."/>
            <person name="Kobatake N."/>
            <person name="Inagaki H."/>
            <person name="Ikema Y."/>
            <person name="Okamoto S."/>
            <person name="Okitani R."/>
            <person name="Kawakami T."/>
            <person name="Noguchi S."/>
            <person name="Itoh T."/>
            <person name="Shigeta K."/>
            <person name="Senba T."/>
            <person name="Matsumura K."/>
            <person name="Nakajima Y."/>
            <person name="Mizuno T."/>
            <person name="Morinaga M."/>
            <person name="Sasaki M."/>
            <person name="Togashi T."/>
            <person name="Oyama M."/>
            <person name="Hata H."/>
            <person name="Watanabe M."/>
            <person name="Komatsu T."/>
            <person name="Mizushima-Sugano J."/>
            <person name="Satoh T."/>
            <person name="Shirai Y."/>
            <person name="Takahashi Y."/>
            <person name="Nakagawa K."/>
            <person name="Okumura K."/>
            <person name="Nagase T."/>
            <person name="Nomura N."/>
            <person name="Kikuchi H."/>
            <person name="Masuho Y."/>
            <person name="Yamashita R."/>
            <person name="Nakai K."/>
            <person name="Yada T."/>
            <person name="Nakamura Y."/>
            <person name="Ohara O."/>
            <person name="Isogai T."/>
            <person name="Sugano S."/>
        </authorList>
    </citation>
    <scope>NUCLEOTIDE SEQUENCE [LARGE SCALE MRNA] (ISOFORM 1)</scope>
</reference>
<reference key="3">
    <citation type="journal article" date="2004" name="Genome Biol.">
        <title>A genome annotation-driven approach to cloning the human ORFeome.</title>
        <authorList>
            <person name="Collins J.E."/>
            <person name="Wright C.L."/>
            <person name="Edwards C.A."/>
            <person name="Davis M.P."/>
            <person name="Grinham J.A."/>
            <person name="Cole C.G."/>
            <person name="Goward M.E."/>
            <person name="Aguado B."/>
            <person name="Mallya M."/>
            <person name="Mokrab Y."/>
            <person name="Huckle E.J."/>
            <person name="Beare D.M."/>
            <person name="Dunham I."/>
        </authorList>
    </citation>
    <scope>NUCLEOTIDE SEQUENCE [LARGE SCALE MRNA] (ISOFORM 2)</scope>
    <scope>VARIANTS TYR-141; SER-290; GLY-324; CYS-341 AND ILE-348</scope>
</reference>
<reference key="4">
    <citation type="journal article" date="1999" name="Nature">
        <title>The DNA sequence of human chromosome 22.</title>
        <authorList>
            <person name="Dunham I."/>
            <person name="Hunt A.R."/>
            <person name="Collins J.E."/>
            <person name="Bruskiewich R."/>
            <person name="Beare D.M."/>
            <person name="Clamp M."/>
            <person name="Smink L.J."/>
            <person name="Ainscough R."/>
            <person name="Almeida J.P."/>
            <person name="Babbage A.K."/>
            <person name="Bagguley C."/>
            <person name="Bailey J."/>
            <person name="Barlow K.F."/>
            <person name="Bates K.N."/>
            <person name="Beasley O.P."/>
            <person name="Bird C.P."/>
            <person name="Blakey S.E."/>
            <person name="Bridgeman A.M."/>
            <person name="Buck D."/>
            <person name="Burgess J."/>
            <person name="Burrill W.D."/>
            <person name="Burton J."/>
            <person name="Carder C."/>
            <person name="Carter N.P."/>
            <person name="Chen Y."/>
            <person name="Clark G."/>
            <person name="Clegg S.M."/>
            <person name="Cobley V.E."/>
            <person name="Cole C.G."/>
            <person name="Collier R.E."/>
            <person name="Connor R."/>
            <person name="Conroy D."/>
            <person name="Corby N.R."/>
            <person name="Coville G.J."/>
            <person name="Cox A.V."/>
            <person name="Davis J."/>
            <person name="Dawson E."/>
            <person name="Dhami P.D."/>
            <person name="Dockree C."/>
            <person name="Dodsworth S.J."/>
            <person name="Durbin R.M."/>
            <person name="Ellington A.G."/>
            <person name="Evans K.L."/>
            <person name="Fey J.M."/>
            <person name="Fleming K."/>
            <person name="French L."/>
            <person name="Garner A.A."/>
            <person name="Gilbert J.G.R."/>
            <person name="Goward M.E."/>
            <person name="Grafham D.V."/>
            <person name="Griffiths M.N.D."/>
            <person name="Hall C."/>
            <person name="Hall R.E."/>
            <person name="Hall-Tamlyn G."/>
            <person name="Heathcott R.W."/>
            <person name="Ho S."/>
            <person name="Holmes S."/>
            <person name="Hunt S.E."/>
            <person name="Jones M.C."/>
            <person name="Kershaw J."/>
            <person name="Kimberley A.M."/>
            <person name="King A."/>
            <person name="Laird G.K."/>
            <person name="Langford C.F."/>
            <person name="Leversha M.A."/>
            <person name="Lloyd C."/>
            <person name="Lloyd D.M."/>
            <person name="Martyn I.D."/>
            <person name="Mashreghi-Mohammadi M."/>
            <person name="Matthews L.H."/>
            <person name="Mccann O.T."/>
            <person name="Mcclay J."/>
            <person name="Mclaren S."/>
            <person name="McMurray A.A."/>
            <person name="Milne S.A."/>
            <person name="Mortimore B.J."/>
            <person name="Odell C.N."/>
            <person name="Pavitt R."/>
            <person name="Pearce A.V."/>
            <person name="Pearson D."/>
            <person name="Phillimore B.J.C.T."/>
            <person name="Phillips S.H."/>
            <person name="Plumb R.W."/>
            <person name="Ramsay H."/>
            <person name="Ramsey Y."/>
            <person name="Rogers L."/>
            <person name="Ross M.T."/>
            <person name="Scott C.E."/>
            <person name="Sehra H.K."/>
            <person name="Skuce C.D."/>
            <person name="Smalley S."/>
            <person name="Smith M.L."/>
            <person name="Soderlund C."/>
            <person name="Spragon L."/>
            <person name="Steward C.A."/>
            <person name="Sulston J.E."/>
            <person name="Swann R.M."/>
            <person name="Vaudin M."/>
            <person name="Wall M."/>
            <person name="Wallis J.M."/>
            <person name="Whiteley M.N."/>
            <person name="Willey D.L."/>
            <person name="Williams L."/>
            <person name="Williams S.A."/>
            <person name="Williamson H."/>
            <person name="Wilmer T.E."/>
            <person name="Wilming L."/>
            <person name="Wright C.L."/>
            <person name="Hubbard T."/>
            <person name="Bentley D.R."/>
            <person name="Beck S."/>
            <person name="Rogers J."/>
            <person name="Shimizu N."/>
            <person name="Minoshima S."/>
            <person name="Kawasaki K."/>
            <person name="Sasaki T."/>
            <person name="Asakawa S."/>
            <person name="Kudoh J."/>
            <person name="Shintani A."/>
            <person name="Shibuya K."/>
            <person name="Yoshizaki Y."/>
            <person name="Aoki N."/>
            <person name="Mitsuyama S."/>
            <person name="Roe B.A."/>
            <person name="Chen F."/>
            <person name="Chu L."/>
            <person name="Crabtree J."/>
            <person name="Deschamps S."/>
            <person name="Do A."/>
            <person name="Do T."/>
            <person name="Dorman A."/>
            <person name="Fang F."/>
            <person name="Fu Y."/>
            <person name="Hu P."/>
            <person name="Hua A."/>
            <person name="Kenton S."/>
            <person name="Lai H."/>
            <person name="Lao H.I."/>
            <person name="Lewis J."/>
            <person name="Lewis S."/>
            <person name="Lin S.-P."/>
            <person name="Loh P."/>
            <person name="Malaj E."/>
            <person name="Nguyen T."/>
            <person name="Pan H."/>
            <person name="Phan S."/>
            <person name="Qi S."/>
            <person name="Qian Y."/>
            <person name="Ray L."/>
            <person name="Ren Q."/>
            <person name="Shaull S."/>
            <person name="Sloan D."/>
            <person name="Song L."/>
            <person name="Wang Q."/>
            <person name="Wang Y."/>
            <person name="Wang Z."/>
            <person name="White J."/>
            <person name="Willingham D."/>
            <person name="Wu H."/>
            <person name="Yao Z."/>
            <person name="Zhan M."/>
            <person name="Zhang G."/>
            <person name="Chissoe S."/>
            <person name="Murray J."/>
            <person name="Miller N."/>
            <person name="Minx P."/>
            <person name="Fulton R."/>
            <person name="Johnson D."/>
            <person name="Bemis G."/>
            <person name="Bentley D."/>
            <person name="Bradshaw H."/>
            <person name="Bourne S."/>
            <person name="Cordes M."/>
            <person name="Du Z."/>
            <person name="Fulton L."/>
            <person name="Goela D."/>
            <person name="Graves T."/>
            <person name="Hawkins J."/>
            <person name="Hinds K."/>
            <person name="Kemp K."/>
            <person name="Latreille P."/>
            <person name="Layman D."/>
            <person name="Ozersky P."/>
            <person name="Rohlfing T."/>
            <person name="Scheet P."/>
            <person name="Walker C."/>
            <person name="Wamsley A."/>
            <person name="Wohldmann P."/>
            <person name="Pepin K."/>
            <person name="Nelson J."/>
            <person name="Korf I."/>
            <person name="Bedell J.A."/>
            <person name="Hillier L.W."/>
            <person name="Mardis E."/>
            <person name="Waterston R."/>
            <person name="Wilson R."/>
            <person name="Emanuel B.S."/>
            <person name="Shaikh T."/>
            <person name="Kurahashi H."/>
            <person name="Saitta S."/>
            <person name="Budarf M.L."/>
            <person name="McDermid H.E."/>
            <person name="Johnson A."/>
            <person name="Wong A.C.C."/>
            <person name="Morrow B.E."/>
            <person name="Edelmann L."/>
            <person name="Kim U.J."/>
            <person name="Shizuya H."/>
            <person name="Simon M.I."/>
            <person name="Dumanski J.P."/>
            <person name="Peyrard M."/>
            <person name="Kedra D."/>
            <person name="Seroussi E."/>
            <person name="Fransson I."/>
            <person name="Tapia I."/>
            <person name="Bruder C.E."/>
            <person name="O'Brien K.P."/>
            <person name="Wilkinson P."/>
            <person name="Bodenteich A."/>
            <person name="Hartman K."/>
            <person name="Hu X."/>
            <person name="Khan A.S."/>
            <person name="Lane L."/>
            <person name="Tilahun Y."/>
            <person name="Wright H."/>
        </authorList>
    </citation>
    <scope>NUCLEOTIDE SEQUENCE [LARGE SCALE GENOMIC DNA]</scope>
</reference>
<reference key="5">
    <citation type="journal article" date="2004" name="Genome Res.">
        <title>The status, quality, and expansion of the NIH full-length cDNA project: the Mammalian Gene Collection (MGC).</title>
        <authorList>
            <consortium name="The MGC Project Team"/>
        </authorList>
    </citation>
    <scope>NUCLEOTIDE SEQUENCE [LARGE SCALE MRNA] (ISOFORMS 2 AND 3)</scope>
    <source>
        <tissue>Brain</tissue>
    </source>
</reference>
<name>RFPL2_HUMAN</name>
<protein>
    <recommendedName>
        <fullName>Ret finger protein-like 2</fullName>
    </recommendedName>
    <alternativeName>
        <fullName>RING finger protein 79</fullName>
    </alternativeName>
</protein>
<dbReference type="EMBL" id="AJ010231">
    <property type="protein sequence ID" value="CAA09045.1"/>
    <property type="status" value="ALT_INIT"/>
    <property type="molecule type" value="mRNA"/>
</dbReference>
<dbReference type="EMBL" id="AK055999">
    <property type="status" value="NOT_ANNOTATED_CDS"/>
    <property type="molecule type" value="mRNA"/>
</dbReference>
<dbReference type="EMBL" id="CR456563">
    <property type="protein sequence ID" value="CAG30449.1"/>
    <property type="status" value="ALT_SEQ"/>
    <property type="molecule type" value="mRNA"/>
</dbReference>
<dbReference type="EMBL" id="AL008723">
    <property type="status" value="NOT_ANNOTATED_CDS"/>
    <property type="molecule type" value="Genomic_DNA"/>
</dbReference>
<dbReference type="EMBL" id="BC051910">
    <property type="protein sequence ID" value="AAH51910.1"/>
    <property type="status" value="ALT_SEQ"/>
    <property type="molecule type" value="mRNA"/>
</dbReference>
<dbReference type="EMBL" id="BC069827">
    <property type="protein sequence ID" value="AAH69827.2"/>
    <property type="molecule type" value="mRNA"/>
</dbReference>
<dbReference type="CCDS" id="CCDS43009.2">
    <molecule id="O75678-1"/>
</dbReference>
<dbReference type="RefSeq" id="NP_001091997.2">
    <molecule id="O75678-1"/>
    <property type="nucleotide sequence ID" value="NM_001098527.3"/>
</dbReference>
<dbReference type="RefSeq" id="NP_001153017.1">
    <property type="nucleotide sequence ID" value="NM_001159545.1"/>
</dbReference>
<dbReference type="RefSeq" id="NP_001153018.1">
    <property type="nucleotide sequence ID" value="NM_001159546.1"/>
</dbReference>
<dbReference type="RefSeq" id="NP_001381484.1">
    <molecule id="O75678-1"/>
    <property type="nucleotide sequence ID" value="NM_001394555.1"/>
</dbReference>
<dbReference type="RefSeq" id="NP_006596.2">
    <property type="nucleotide sequence ID" value="NM_006605.3"/>
</dbReference>
<dbReference type="RefSeq" id="XP_011528134.1">
    <property type="nucleotide sequence ID" value="XM_011529832.1"/>
</dbReference>
<dbReference type="RefSeq" id="XP_016884024.1">
    <property type="nucleotide sequence ID" value="XM_017028535.1"/>
</dbReference>
<dbReference type="RefSeq" id="XP_016884025.1">
    <property type="nucleotide sequence ID" value="XM_017028536.1"/>
</dbReference>
<dbReference type="SMR" id="O75678"/>
<dbReference type="BioGRID" id="115962">
    <property type="interactions" value="21"/>
</dbReference>
<dbReference type="FunCoup" id="O75678">
    <property type="interactions" value="548"/>
</dbReference>
<dbReference type="IntAct" id="O75678">
    <property type="interactions" value="18"/>
</dbReference>
<dbReference type="STRING" id="9606.ENSP00000383096"/>
<dbReference type="BioMuta" id="RFPL2"/>
<dbReference type="jPOST" id="O75678"/>
<dbReference type="MassIVE" id="O75678"/>
<dbReference type="PaxDb" id="9606-ENSP00000383096"/>
<dbReference type="PeptideAtlas" id="O75678"/>
<dbReference type="Antibodypedia" id="25209">
    <property type="antibodies" value="109 antibodies from 26 providers"/>
</dbReference>
<dbReference type="DNASU" id="10739"/>
<dbReference type="Ensembl" id="ENST00000248983.8">
    <molecule id="O75678-1"/>
    <property type="protein sequence ID" value="ENSP00000248983.5"/>
    <property type="gene ID" value="ENSG00000128253.16"/>
</dbReference>
<dbReference type="Ensembl" id="ENST00000400237.2">
    <molecule id="O75678-1"/>
    <property type="protein sequence ID" value="ENSP00000383096.1"/>
    <property type="gene ID" value="ENSG00000128253.16"/>
</dbReference>
<dbReference type="Ensembl" id="ENST00000626996.2">
    <molecule id="O75678-2"/>
    <property type="protein sequence ID" value="ENSP00000486618.1"/>
    <property type="gene ID" value="ENSG00000128253.16"/>
</dbReference>
<dbReference type="Ensembl" id="ENST00000652607.2">
    <molecule id="O75678-1"/>
    <property type="protein sequence ID" value="ENSP00000498332.1"/>
    <property type="gene ID" value="ENSG00000128253.16"/>
</dbReference>
<dbReference type="GeneID" id="10739"/>
<dbReference type="KEGG" id="hsa:10739"/>
<dbReference type="MANE-Select" id="ENST00000652607.2">
    <property type="protein sequence ID" value="ENSP00000498332.1"/>
    <property type="RefSeq nucleotide sequence ID" value="NM_001394555.1"/>
    <property type="RefSeq protein sequence ID" value="NP_001381484.1"/>
</dbReference>
<dbReference type="UCSC" id="uc003amg.4">
    <molecule id="O75678-1"/>
    <property type="organism name" value="human"/>
</dbReference>
<dbReference type="AGR" id="HGNC:9979"/>
<dbReference type="CTD" id="10739"/>
<dbReference type="GeneCards" id="RFPL2"/>
<dbReference type="HGNC" id="HGNC:9979">
    <property type="gene designation" value="RFPL2"/>
</dbReference>
<dbReference type="HPA" id="ENSG00000128253">
    <property type="expression patterns" value="Group enriched (brain, prostate)"/>
</dbReference>
<dbReference type="MIM" id="605969">
    <property type="type" value="gene"/>
</dbReference>
<dbReference type="neXtProt" id="NX_O75678"/>
<dbReference type="OpenTargets" id="ENSG00000128253"/>
<dbReference type="PharmGKB" id="PA34348"/>
<dbReference type="VEuPathDB" id="HostDB:ENSG00000128253"/>
<dbReference type="eggNOG" id="KOG2177">
    <property type="taxonomic scope" value="Eukaryota"/>
</dbReference>
<dbReference type="GeneTree" id="ENSGT00940000163408"/>
<dbReference type="HOGENOM" id="CLU_013137_7_1_1"/>
<dbReference type="InParanoid" id="O75678"/>
<dbReference type="OMA" id="RVQQHAI"/>
<dbReference type="OrthoDB" id="9049620at2759"/>
<dbReference type="PAN-GO" id="O75678">
    <property type="GO annotations" value="4 GO annotations based on evolutionary models"/>
</dbReference>
<dbReference type="PhylomeDB" id="O75678"/>
<dbReference type="TreeFam" id="TF317532"/>
<dbReference type="PathwayCommons" id="O75678"/>
<dbReference type="SignaLink" id="O75678"/>
<dbReference type="SIGNOR" id="O75678"/>
<dbReference type="BioGRID-ORCS" id="10739">
    <property type="hits" value="43 hits in 1144 CRISPR screens"/>
</dbReference>
<dbReference type="ChiTaRS" id="RFPL2">
    <property type="organism name" value="human"/>
</dbReference>
<dbReference type="GenomeRNAi" id="10739"/>
<dbReference type="Pharos" id="O75678">
    <property type="development level" value="Tdark"/>
</dbReference>
<dbReference type="PRO" id="PR:O75678"/>
<dbReference type="Proteomes" id="UP000005640">
    <property type="component" value="Chromosome 22"/>
</dbReference>
<dbReference type="RNAct" id="O75678">
    <property type="molecule type" value="protein"/>
</dbReference>
<dbReference type="Bgee" id="ENSG00000128253">
    <property type="expression patterns" value="Expressed in buccal mucosa cell and 85 other cell types or tissues"/>
</dbReference>
<dbReference type="ExpressionAtlas" id="O75678">
    <property type="expression patterns" value="baseline and differential"/>
</dbReference>
<dbReference type="GO" id="GO:0005737">
    <property type="term" value="C:cytoplasm"/>
    <property type="evidence" value="ECO:0000318"/>
    <property type="project" value="GO_Central"/>
</dbReference>
<dbReference type="GO" id="GO:0061630">
    <property type="term" value="F:ubiquitin protein ligase activity"/>
    <property type="evidence" value="ECO:0000318"/>
    <property type="project" value="GO_Central"/>
</dbReference>
<dbReference type="GO" id="GO:0008270">
    <property type="term" value="F:zinc ion binding"/>
    <property type="evidence" value="ECO:0007669"/>
    <property type="project" value="UniProtKB-KW"/>
</dbReference>
<dbReference type="GO" id="GO:0045087">
    <property type="term" value="P:innate immune response"/>
    <property type="evidence" value="ECO:0000318"/>
    <property type="project" value="GO_Central"/>
</dbReference>
<dbReference type="GO" id="GO:0010468">
    <property type="term" value="P:regulation of gene expression"/>
    <property type="evidence" value="ECO:0000318"/>
    <property type="project" value="GO_Central"/>
</dbReference>
<dbReference type="CDD" id="cd15821">
    <property type="entry name" value="SPRY_PRY_RFPL"/>
    <property type="match status" value="1"/>
</dbReference>
<dbReference type="CDD" id="cd16621">
    <property type="entry name" value="vRING-HC-C4C4_RFPL"/>
    <property type="match status" value="1"/>
</dbReference>
<dbReference type="FunFam" id="2.60.120.920:FF:000040">
    <property type="entry name" value="Ret finger protein-like 4A"/>
    <property type="match status" value="1"/>
</dbReference>
<dbReference type="Gene3D" id="2.60.120.920">
    <property type="match status" value="1"/>
</dbReference>
<dbReference type="Gene3D" id="3.30.40.10">
    <property type="entry name" value="Zinc/RING finger domain, C3HC4 (zinc finger)"/>
    <property type="match status" value="1"/>
</dbReference>
<dbReference type="InterPro" id="IPR001870">
    <property type="entry name" value="B30.2/SPRY"/>
</dbReference>
<dbReference type="InterPro" id="IPR043136">
    <property type="entry name" value="B30.2/SPRY_sf"/>
</dbReference>
<dbReference type="InterPro" id="IPR003879">
    <property type="entry name" value="Butyrophylin_SPRY"/>
</dbReference>
<dbReference type="InterPro" id="IPR013320">
    <property type="entry name" value="ConA-like_dom_sf"/>
</dbReference>
<dbReference type="InterPro" id="IPR006574">
    <property type="entry name" value="PRY"/>
</dbReference>
<dbReference type="InterPro" id="IPR022723">
    <property type="entry name" value="RDM_domain_RFPL"/>
</dbReference>
<dbReference type="InterPro" id="IPR037960">
    <property type="entry name" value="SPRY/PRY_RFPL"/>
</dbReference>
<dbReference type="InterPro" id="IPR003877">
    <property type="entry name" value="SPRY_dom"/>
</dbReference>
<dbReference type="InterPro" id="IPR050143">
    <property type="entry name" value="TRIM/RBCC"/>
</dbReference>
<dbReference type="InterPro" id="IPR013083">
    <property type="entry name" value="Znf_RING/FYVE/PHD"/>
</dbReference>
<dbReference type="PANTHER" id="PTHR24103">
    <property type="entry name" value="E3 UBIQUITIN-PROTEIN LIGASE TRIM"/>
    <property type="match status" value="1"/>
</dbReference>
<dbReference type="Pfam" id="PF13765">
    <property type="entry name" value="PRY"/>
    <property type="match status" value="1"/>
</dbReference>
<dbReference type="Pfam" id="PF11002">
    <property type="entry name" value="RDM"/>
    <property type="match status" value="1"/>
</dbReference>
<dbReference type="Pfam" id="PF00622">
    <property type="entry name" value="SPRY"/>
    <property type="match status" value="1"/>
</dbReference>
<dbReference type="Pfam" id="PF15227">
    <property type="entry name" value="zf-C3HC4_4"/>
    <property type="match status" value="1"/>
</dbReference>
<dbReference type="PRINTS" id="PR01407">
    <property type="entry name" value="BUTYPHLNCDUF"/>
</dbReference>
<dbReference type="SMART" id="SM00589">
    <property type="entry name" value="PRY"/>
    <property type="match status" value="1"/>
</dbReference>
<dbReference type="SMART" id="SM00449">
    <property type="entry name" value="SPRY"/>
    <property type="match status" value="1"/>
</dbReference>
<dbReference type="SUPFAM" id="SSF49899">
    <property type="entry name" value="Concanavalin A-like lectins/glucanases"/>
    <property type="match status" value="1"/>
</dbReference>
<dbReference type="SUPFAM" id="SSF57850">
    <property type="entry name" value="RING/U-box"/>
    <property type="match status" value="1"/>
</dbReference>
<dbReference type="PROSITE" id="PS50188">
    <property type="entry name" value="B302_SPRY"/>
    <property type="match status" value="1"/>
</dbReference>
<comment type="alternative products">
    <event type="alternative splicing"/>
    <isoform>
        <id>O75678-1</id>
        <name>1</name>
        <sequence type="displayed"/>
    </isoform>
    <isoform>
        <id>O75678-2</id>
        <name>2</name>
        <sequence type="described" ref="VSP_059822 VSP_059823"/>
    </isoform>
    <isoform>
        <id>O75678-3</id>
        <name>3</name>
        <sequence type="described" ref="VSP_038326 VSP_038327"/>
    </isoform>
</comment>
<comment type="tissue specificity">
    <text>Seems to be expressed in prostate and less abundantly in adult brain, fetal liver, and fetal kidney.</text>
</comment>
<comment type="miscellaneous">
    <molecule>Isoform 2</molecule>
    <text evidence="7">May be produced at very low levels due to a premature stop codon in the mRNA, leading to nonsense-mediated mRNA decay.</text>
</comment>
<comment type="miscellaneous">
    <molecule>Isoform 3</molecule>
    <text evidence="7">May be due to intron retention.</text>
</comment>
<comment type="sequence caution" evidence="7">
    <conflict type="erroneous translation">
        <sequence resource="EMBL-CDS" id="AAH51910"/>
    </conflict>
    <text>Wrong choice of CDS.</text>
</comment>
<comment type="sequence caution" evidence="7">
    <conflict type="erroneous initiation">
        <sequence resource="EMBL-CDS" id="CAA09045"/>
    </conflict>
    <text>Truncated N-terminus.</text>
</comment>
<comment type="sequence caution" evidence="7">
    <conflict type="erroneous translation">
        <sequence resource="EMBL-CDS" id="CAG30449"/>
    </conflict>
    <text>Wrong choice of CDS.</text>
</comment>
<evidence type="ECO:0000255" key="1">
    <source>
        <dbReference type="PROSITE-ProRule" id="PRU00548"/>
    </source>
</evidence>
<evidence type="ECO:0000269" key="2">
    <source>
    </source>
</evidence>
<evidence type="ECO:0000269" key="3">
    <source>
    </source>
</evidence>
<evidence type="ECO:0000303" key="4">
    <source>
    </source>
</evidence>
<evidence type="ECO:0000303" key="5">
    <source>
    </source>
</evidence>
<evidence type="ECO:0000303" key="6">
    <source>
    </source>
</evidence>
<evidence type="ECO:0000305" key="7"/>
<gene>
    <name type="primary">RFPL2</name>
    <name type="synonym">RNF79</name>
</gene>
<organism>
    <name type="scientific">Homo sapiens</name>
    <name type="common">Human</name>
    <dbReference type="NCBI Taxonomy" id="9606"/>
    <lineage>
        <taxon>Eukaryota</taxon>
        <taxon>Metazoa</taxon>
        <taxon>Chordata</taxon>
        <taxon>Craniata</taxon>
        <taxon>Vertebrata</taxon>
        <taxon>Euteleostomi</taxon>
        <taxon>Mammalia</taxon>
        <taxon>Eutheria</taxon>
        <taxon>Euarchontoglires</taxon>
        <taxon>Primates</taxon>
        <taxon>Haplorrhini</taxon>
        <taxon>Catarrhini</taxon>
        <taxon>Hominidae</taxon>
        <taxon>Homo</taxon>
    </lineage>
</organism>
<accession>O75678</accession>
<feature type="chain" id="PRO_0000056031" description="Ret finger protein-like 2">
    <location>
        <begin position="1"/>
        <end position="378"/>
    </location>
</feature>
<feature type="domain" description="B30.2/SPRY" evidence="1">
    <location>
        <begin position="168"/>
        <end position="362"/>
    </location>
</feature>
<feature type="zinc finger region" description="RING-type; degenerate">
    <location>
        <begin position="101"/>
        <end position="143"/>
    </location>
</feature>
<feature type="splice variant" id="VSP_038326" description="In isoform 3." evidence="4 6">
    <location>
        <begin position="1"/>
        <end position="61"/>
    </location>
</feature>
<feature type="splice variant" id="VSP_059822" description="In isoform 2." evidence="5 6">
    <original>LIRLEGVEGRDPVGGGNLTNKRPSCAPSPQDLSAQW</original>
    <variation>GHGCTLPRSKQLSRLLRLSGKTNVPGVWMRRLPQVH</variation>
    <location>
        <begin position="41"/>
        <end position="76"/>
    </location>
</feature>
<feature type="splice variant" id="VSP_038327" description="In isoform 3." evidence="4 6">
    <original>RPSCAPSPQDLSAQWKQLEDRGASSRR</original>
    <variation>MKRLSLVTTNRLSPHGNFFTLCTFPLA</variation>
    <location>
        <begin position="62"/>
        <end position="88"/>
    </location>
</feature>
<feature type="splice variant" id="VSP_059823" description="In isoform 2." evidence="5 6">
    <location>
        <begin position="77"/>
        <end position="378"/>
    </location>
</feature>
<feature type="sequence variant" id="VAR_060534" description="In dbSNP:rs8135276.">
    <original>A</original>
    <variation>T</variation>
    <location>
        <position position="119"/>
    </location>
</feature>
<feature type="sequence variant" id="VAR_060535" description="In dbSNP:rs136478." evidence="2 3">
    <original>C</original>
    <variation>Y</variation>
    <location>
        <position position="141"/>
    </location>
</feature>
<feature type="sequence variant" id="VAR_060536" description="In dbSNP:rs56240743.">
    <original>Q</original>
    <variation>H</variation>
    <location>
        <position position="215"/>
    </location>
</feature>
<feature type="sequence variant" id="VAR_060537" description="In dbSNP:rs136472." evidence="2 3">
    <original>T</original>
    <variation>S</variation>
    <location>
        <position position="290"/>
    </location>
</feature>
<feature type="sequence variant" id="VAR_060538" description="In dbSNP:rs136470." evidence="2 3">
    <original>S</original>
    <variation>G</variation>
    <location>
        <position position="324"/>
    </location>
</feature>
<feature type="sequence variant" id="VAR_060539" description="In dbSNP:rs136468." evidence="2 3">
    <original>R</original>
    <variation>C</variation>
    <location>
        <position position="341"/>
    </location>
</feature>
<feature type="sequence variant" id="VAR_060540" description="In dbSNP:rs136467." evidence="2 3">
    <original>V</original>
    <variation>I</variation>
    <location>
        <position position="348"/>
    </location>
</feature>
<proteinExistence type="evidence at transcript level"/>
<keyword id="KW-0025">Alternative splicing</keyword>
<keyword id="KW-0479">Metal-binding</keyword>
<keyword id="KW-1185">Reference proteome</keyword>
<keyword id="KW-0862">Zinc</keyword>
<keyword id="KW-0863">Zinc-finger</keyword>